<comment type="function">
    <text evidence="1">Together with the chaperonin GroEL, plays an essential role in assisting protein folding. The GroEL-GroES system forms a nano-cage that allows encapsulation of the non-native substrate proteins and provides a physical environment optimized to promote and accelerate protein folding. GroES binds to the apical surface of the GroEL ring, thereby capping the opening of the GroEL channel.</text>
</comment>
<comment type="subunit">
    <text evidence="1">Heptamer of 7 subunits arranged in a ring. Interacts with the chaperonin GroEL.</text>
</comment>
<comment type="subcellular location">
    <subcellularLocation>
        <location evidence="1">Cytoplasm</location>
    </subcellularLocation>
</comment>
<comment type="similarity">
    <text evidence="1">Belongs to the GroES chaperonin family.</text>
</comment>
<proteinExistence type="inferred from homology"/>
<keyword id="KW-0143">Chaperone</keyword>
<keyword id="KW-0963">Cytoplasm</keyword>
<keyword id="KW-1185">Reference proteome</keyword>
<accession>Q04IQ2</accession>
<evidence type="ECO:0000255" key="1">
    <source>
        <dbReference type="HAMAP-Rule" id="MF_00580"/>
    </source>
</evidence>
<dbReference type="EMBL" id="CP000410">
    <property type="protein sequence ID" value="ABJ55225.1"/>
    <property type="molecule type" value="Genomic_DNA"/>
</dbReference>
<dbReference type="RefSeq" id="WP_000917304.1">
    <property type="nucleotide sequence ID" value="NZ_JAMLJR010000010.1"/>
</dbReference>
<dbReference type="SMR" id="Q04IQ2"/>
<dbReference type="PaxDb" id="373153-SPD_1710"/>
<dbReference type="KEGG" id="spd:SPD_1710"/>
<dbReference type="eggNOG" id="COG0234">
    <property type="taxonomic scope" value="Bacteria"/>
</dbReference>
<dbReference type="HOGENOM" id="CLU_132825_1_2_9"/>
<dbReference type="BioCyc" id="SPNE373153:G1G6V-1846-MONOMER"/>
<dbReference type="Proteomes" id="UP000001452">
    <property type="component" value="Chromosome"/>
</dbReference>
<dbReference type="GO" id="GO:0005737">
    <property type="term" value="C:cytoplasm"/>
    <property type="evidence" value="ECO:0007669"/>
    <property type="project" value="UniProtKB-SubCell"/>
</dbReference>
<dbReference type="GO" id="GO:0005524">
    <property type="term" value="F:ATP binding"/>
    <property type="evidence" value="ECO:0007669"/>
    <property type="project" value="InterPro"/>
</dbReference>
<dbReference type="GO" id="GO:0046872">
    <property type="term" value="F:metal ion binding"/>
    <property type="evidence" value="ECO:0007669"/>
    <property type="project" value="TreeGrafter"/>
</dbReference>
<dbReference type="GO" id="GO:0044183">
    <property type="term" value="F:protein folding chaperone"/>
    <property type="evidence" value="ECO:0007669"/>
    <property type="project" value="InterPro"/>
</dbReference>
<dbReference type="GO" id="GO:0051087">
    <property type="term" value="F:protein-folding chaperone binding"/>
    <property type="evidence" value="ECO:0007669"/>
    <property type="project" value="TreeGrafter"/>
</dbReference>
<dbReference type="GO" id="GO:0051082">
    <property type="term" value="F:unfolded protein binding"/>
    <property type="evidence" value="ECO:0007669"/>
    <property type="project" value="TreeGrafter"/>
</dbReference>
<dbReference type="GO" id="GO:0051085">
    <property type="term" value="P:chaperone cofactor-dependent protein refolding"/>
    <property type="evidence" value="ECO:0007669"/>
    <property type="project" value="TreeGrafter"/>
</dbReference>
<dbReference type="CDD" id="cd00320">
    <property type="entry name" value="cpn10"/>
    <property type="match status" value="1"/>
</dbReference>
<dbReference type="FunFam" id="2.30.33.40:FF:000007">
    <property type="entry name" value="10 kDa chaperonin"/>
    <property type="match status" value="1"/>
</dbReference>
<dbReference type="Gene3D" id="2.30.33.40">
    <property type="entry name" value="GroES chaperonin"/>
    <property type="match status" value="1"/>
</dbReference>
<dbReference type="HAMAP" id="MF_00580">
    <property type="entry name" value="CH10"/>
    <property type="match status" value="1"/>
</dbReference>
<dbReference type="InterPro" id="IPR020818">
    <property type="entry name" value="Chaperonin_GroES"/>
</dbReference>
<dbReference type="InterPro" id="IPR037124">
    <property type="entry name" value="Chaperonin_GroES_sf"/>
</dbReference>
<dbReference type="InterPro" id="IPR018369">
    <property type="entry name" value="Chaprnonin_Cpn10_CS"/>
</dbReference>
<dbReference type="InterPro" id="IPR011032">
    <property type="entry name" value="GroES-like_sf"/>
</dbReference>
<dbReference type="NCBIfam" id="NF001528">
    <property type="entry name" value="PRK00364.1-4"/>
    <property type="match status" value="1"/>
</dbReference>
<dbReference type="PANTHER" id="PTHR10772">
    <property type="entry name" value="10 KDA HEAT SHOCK PROTEIN"/>
    <property type="match status" value="1"/>
</dbReference>
<dbReference type="PANTHER" id="PTHR10772:SF58">
    <property type="entry name" value="CO-CHAPERONIN GROES"/>
    <property type="match status" value="1"/>
</dbReference>
<dbReference type="Pfam" id="PF00166">
    <property type="entry name" value="Cpn10"/>
    <property type="match status" value="1"/>
</dbReference>
<dbReference type="PRINTS" id="PR00297">
    <property type="entry name" value="CHAPERONIN10"/>
</dbReference>
<dbReference type="SMART" id="SM00883">
    <property type="entry name" value="Cpn10"/>
    <property type="match status" value="1"/>
</dbReference>
<dbReference type="SUPFAM" id="SSF50129">
    <property type="entry name" value="GroES-like"/>
    <property type="match status" value="1"/>
</dbReference>
<dbReference type="PROSITE" id="PS00681">
    <property type="entry name" value="CHAPERONINS_CPN10"/>
    <property type="match status" value="1"/>
</dbReference>
<gene>
    <name evidence="1" type="primary">groES</name>
    <name evidence="1" type="synonym">groS</name>
    <name type="ordered locus">SPD_1710</name>
</gene>
<name>CH10_STRP2</name>
<sequence length="94" mass="9926">MLKPLGDRVLLKIEEKEQTVGGFVLAGSAQEKTKTAQVVATGQGVRTLNGDLVAPSVKTGDRVLVEAHAGLDVKDGDEKYIIVGEANILAIIEE</sequence>
<reference key="1">
    <citation type="journal article" date="2007" name="J. Bacteriol.">
        <title>Genome sequence of Avery's virulent serotype 2 strain D39 of Streptococcus pneumoniae and comparison with that of unencapsulated laboratory strain R6.</title>
        <authorList>
            <person name="Lanie J.A."/>
            <person name="Ng W.-L."/>
            <person name="Kazmierczak K.M."/>
            <person name="Andrzejewski T.M."/>
            <person name="Davidsen T.M."/>
            <person name="Wayne K.J."/>
            <person name="Tettelin H."/>
            <person name="Glass J.I."/>
            <person name="Winkler M.E."/>
        </authorList>
    </citation>
    <scope>NUCLEOTIDE SEQUENCE [LARGE SCALE GENOMIC DNA]</scope>
    <source>
        <strain>D39 / NCTC 7466</strain>
    </source>
</reference>
<organism>
    <name type="scientific">Streptococcus pneumoniae serotype 2 (strain D39 / NCTC 7466)</name>
    <dbReference type="NCBI Taxonomy" id="373153"/>
    <lineage>
        <taxon>Bacteria</taxon>
        <taxon>Bacillati</taxon>
        <taxon>Bacillota</taxon>
        <taxon>Bacilli</taxon>
        <taxon>Lactobacillales</taxon>
        <taxon>Streptococcaceae</taxon>
        <taxon>Streptococcus</taxon>
    </lineage>
</organism>
<protein>
    <recommendedName>
        <fullName evidence="1">Co-chaperonin GroES</fullName>
    </recommendedName>
    <alternativeName>
        <fullName evidence="1">10 kDa chaperonin</fullName>
    </alternativeName>
    <alternativeName>
        <fullName evidence="1">Chaperonin-10</fullName>
        <shortName evidence="1">Cpn10</shortName>
    </alternativeName>
</protein>
<feature type="chain" id="PRO_1000025379" description="Co-chaperonin GroES">
    <location>
        <begin position="1"/>
        <end position="94"/>
    </location>
</feature>